<dbReference type="EC" id="2.7.4.6" evidence="1"/>
<dbReference type="EMBL" id="CP001131">
    <property type="protein sequence ID" value="ACG73458.1"/>
    <property type="molecule type" value="Genomic_DNA"/>
</dbReference>
<dbReference type="RefSeq" id="WP_012526257.1">
    <property type="nucleotide sequence ID" value="NC_011145.1"/>
</dbReference>
<dbReference type="SMR" id="B4UDP2"/>
<dbReference type="KEGG" id="ank:AnaeK_2231"/>
<dbReference type="HOGENOM" id="CLU_060216_8_1_7"/>
<dbReference type="OrthoDB" id="9801161at2"/>
<dbReference type="Proteomes" id="UP000001871">
    <property type="component" value="Chromosome"/>
</dbReference>
<dbReference type="GO" id="GO:0005737">
    <property type="term" value="C:cytoplasm"/>
    <property type="evidence" value="ECO:0007669"/>
    <property type="project" value="UniProtKB-SubCell"/>
</dbReference>
<dbReference type="GO" id="GO:0005524">
    <property type="term" value="F:ATP binding"/>
    <property type="evidence" value="ECO:0007669"/>
    <property type="project" value="UniProtKB-UniRule"/>
</dbReference>
<dbReference type="GO" id="GO:0046872">
    <property type="term" value="F:metal ion binding"/>
    <property type="evidence" value="ECO:0007669"/>
    <property type="project" value="UniProtKB-KW"/>
</dbReference>
<dbReference type="GO" id="GO:0004550">
    <property type="term" value="F:nucleoside diphosphate kinase activity"/>
    <property type="evidence" value="ECO:0007669"/>
    <property type="project" value="UniProtKB-UniRule"/>
</dbReference>
<dbReference type="GO" id="GO:0006241">
    <property type="term" value="P:CTP biosynthetic process"/>
    <property type="evidence" value="ECO:0007669"/>
    <property type="project" value="UniProtKB-UniRule"/>
</dbReference>
<dbReference type="GO" id="GO:0006183">
    <property type="term" value="P:GTP biosynthetic process"/>
    <property type="evidence" value="ECO:0007669"/>
    <property type="project" value="UniProtKB-UniRule"/>
</dbReference>
<dbReference type="GO" id="GO:0006228">
    <property type="term" value="P:UTP biosynthetic process"/>
    <property type="evidence" value="ECO:0007669"/>
    <property type="project" value="UniProtKB-UniRule"/>
</dbReference>
<dbReference type="CDD" id="cd04413">
    <property type="entry name" value="NDPk_I"/>
    <property type="match status" value="1"/>
</dbReference>
<dbReference type="FunFam" id="3.30.70.141:FF:000001">
    <property type="entry name" value="Nucleoside diphosphate kinase"/>
    <property type="match status" value="1"/>
</dbReference>
<dbReference type="Gene3D" id="3.30.70.141">
    <property type="entry name" value="Nucleoside diphosphate kinase-like domain"/>
    <property type="match status" value="1"/>
</dbReference>
<dbReference type="HAMAP" id="MF_00451">
    <property type="entry name" value="NDP_kinase"/>
    <property type="match status" value="1"/>
</dbReference>
<dbReference type="InterPro" id="IPR034907">
    <property type="entry name" value="NDK-like_dom"/>
</dbReference>
<dbReference type="InterPro" id="IPR036850">
    <property type="entry name" value="NDK-like_dom_sf"/>
</dbReference>
<dbReference type="InterPro" id="IPR001564">
    <property type="entry name" value="Nucleoside_diP_kinase"/>
</dbReference>
<dbReference type="NCBIfam" id="NF001908">
    <property type="entry name" value="PRK00668.1"/>
    <property type="match status" value="1"/>
</dbReference>
<dbReference type="PANTHER" id="PTHR11349">
    <property type="entry name" value="NUCLEOSIDE DIPHOSPHATE KINASE"/>
    <property type="match status" value="1"/>
</dbReference>
<dbReference type="Pfam" id="PF00334">
    <property type="entry name" value="NDK"/>
    <property type="match status" value="1"/>
</dbReference>
<dbReference type="PRINTS" id="PR01243">
    <property type="entry name" value="NUCDPKINASE"/>
</dbReference>
<dbReference type="SMART" id="SM00562">
    <property type="entry name" value="NDK"/>
    <property type="match status" value="1"/>
</dbReference>
<dbReference type="SUPFAM" id="SSF54919">
    <property type="entry name" value="Nucleoside diphosphate kinase, NDK"/>
    <property type="match status" value="1"/>
</dbReference>
<dbReference type="PROSITE" id="PS51374">
    <property type="entry name" value="NDPK_LIKE"/>
    <property type="match status" value="1"/>
</dbReference>
<protein>
    <recommendedName>
        <fullName evidence="1">Nucleoside diphosphate kinase</fullName>
        <shortName evidence="1">NDK</shortName>
        <shortName evidence="1">NDP kinase</shortName>
        <ecNumber evidence="1">2.7.4.6</ecNumber>
    </recommendedName>
    <alternativeName>
        <fullName evidence="1">Nucleoside-2-P kinase</fullName>
    </alternativeName>
</protein>
<name>NDK_ANASK</name>
<evidence type="ECO:0000255" key="1">
    <source>
        <dbReference type="HAMAP-Rule" id="MF_00451"/>
    </source>
</evidence>
<proteinExistence type="inferred from homology"/>
<comment type="function">
    <text evidence="1">Major role in the synthesis of nucleoside triphosphates other than ATP. The ATP gamma phosphate is transferred to the NDP beta phosphate via a ping-pong mechanism, using a phosphorylated active-site intermediate.</text>
</comment>
<comment type="catalytic activity">
    <reaction evidence="1">
        <text>a 2'-deoxyribonucleoside 5'-diphosphate + ATP = a 2'-deoxyribonucleoside 5'-triphosphate + ADP</text>
        <dbReference type="Rhea" id="RHEA:44640"/>
        <dbReference type="ChEBI" id="CHEBI:30616"/>
        <dbReference type="ChEBI" id="CHEBI:61560"/>
        <dbReference type="ChEBI" id="CHEBI:73316"/>
        <dbReference type="ChEBI" id="CHEBI:456216"/>
        <dbReference type="EC" id="2.7.4.6"/>
    </reaction>
</comment>
<comment type="catalytic activity">
    <reaction evidence="1">
        <text>a ribonucleoside 5'-diphosphate + ATP = a ribonucleoside 5'-triphosphate + ADP</text>
        <dbReference type="Rhea" id="RHEA:18113"/>
        <dbReference type="ChEBI" id="CHEBI:30616"/>
        <dbReference type="ChEBI" id="CHEBI:57930"/>
        <dbReference type="ChEBI" id="CHEBI:61557"/>
        <dbReference type="ChEBI" id="CHEBI:456216"/>
        <dbReference type="EC" id="2.7.4.6"/>
    </reaction>
</comment>
<comment type="cofactor">
    <cofactor evidence="1">
        <name>Mg(2+)</name>
        <dbReference type="ChEBI" id="CHEBI:18420"/>
    </cofactor>
</comment>
<comment type="subunit">
    <text evidence="1">Homotetramer.</text>
</comment>
<comment type="subcellular location">
    <subcellularLocation>
        <location evidence="1">Cytoplasm</location>
    </subcellularLocation>
</comment>
<comment type="similarity">
    <text evidence="1">Belongs to the NDK family.</text>
</comment>
<reference key="1">
    <citation type="submission" date="2008-08" db="EMBL/GenBank/DDBJ databases">
        <title>Complete sequence of Anaeromyxobacter sp. K.</title>
        <authorList>
            <consortium name="US DOE Joint Genome Institute"/>
            <person name="Lucas S."/>
            <person name="Copeland A."/>
            <person name="Lapidus A."/>
            <person name="Glavina del Rio T."/>
            <person name="Dalin E."/>
            <person name="Tice H."/>
            <person name="Bruce D."/>
            <person name="Goodwin L."/>
            <person name="Pitluck S."/>
            <person name="Saunders E."/>
            <person name="Brettin T."/>
            <person name="Detter J.C."/>
            <person name="Han C."/>
            <person name="Larimer F."/>
            <person name="Land M."/>
            <person name="Hauser L."/>
            <person name="Kyrpides N."/>
            <person name="Ovchinnikiva G."/>
            <person name="Beliaev A."/>
        </authorList>
    </citation>
    <scope>NUCLEOTIDE SEQUENCE [LARGE SCALE GENOMIC DNA]</scope>
    <source>
        <strain>K</strain>
    </source>
</reference>
<keyword id="KW-0067">ATP-binding</keyword>
<keyword id="KW-0963">Cytoplasm</keyword>
<keyword id="KW-0418">Kinase</keyword>
<keyword id="KW-0460">Magnesium</keyword>
<keyword id="KW-0479">Metal-binding</keyword>
<keyword id="KW-0546">Nucleotide metabolism</keyword>
<keyword id="KW-0547">Nucleotide-binding</keyword>
<keyword id="KW-0597">Phosphoprotein</keyword>
<keyword id="KW-0808">Transferase</keyword>
<sequence>MAIERTLSIIKPDGVEKGIIGKIIGRFEEKGLKPVAIRLTQLSKAEAEGFYAVHKARPFFGDLVKFMTSGPVVLMVLEGENAVARNREIMGATDPKKADAGTIRKDFATDIEKNTVHGSDSAENAKIEVSYFFPEVQVHAYEWKKLA</sequence>
<accession>B4UDP2</accession>
<feature type="chain" id="PRO_1000192254" description="Nucleoside diphosphate kinase">
    <location>
        <begin position="1"/>
        <end position="147"/>
    </location>
</feature>
<feature type="active site" description="Pros-phosphohistidine intermediate" evidence="1">
    <location>
        <position position="117"/>
    </location>
</feature>
<feature type="binding site" evidence="1">
    <location>
        <position position="11"/>
    </location>
    <ligand>
        <name>ATP</name>
        <dbReference type="ChEBI" id="CHEBI:30616"/>
    </ligand>
</feature>
<feature type="binding site" evidence="1">
    <location>
        <position position="59"/>
    </location>
    <ligand>
        <name>ATP</name>
        <dbReference type="ChEBI" id="CHEBI:30616"/>
    </ligand>
</feature>
<feature type="binding site" evidence="1">
    <location>
        <position position="87"/>
    </location>
    <ligand>
        <name>ATP</name>
        <dbReference type="ChEBI" id="CHEBI:30616"/>
    </ligand>
</feature>
<feature type="binding site" evidence="1">
    <location>
        <position position="93"/>
    </location>
    <ligand>
        <name>ATP</name>
        <dbReference type="ChEBI" id="CHEBI:30616"/>
    </ligand>
</feature>
<feature type="binding site" evidence="1">
    <location>
        <position position="104"/>
    </location>
    <ligand>
        <name>ATP</name>
        <dbReference type="ChEBI" id="CHEBI:30616"/>
    </ligand>
</feature>
<feature type="binding site" evidence="1">
    <location>
        <position position="114"/>
    </location>
    <ligand>
        <name>ATP</name>
        <dbReference type="ChEBI" id="CHEBI:30616"/>
    </ligand>
</feature>
<organism>
    <name type="scientific">Anaeromyxobacter sp. (strain K)</name>
    <dbReference type="NCBI Taxonomy" id="447217"/>
    <lineage>
        <taxon>Bacteria</taxon>
        <taxon>Pseudomonadati</taxon>
        <taxon>Myxococcota</taxon>
        <taxon>Myxococcia</taxon>
        <taxon>Myxococcales</taxon>
        <taxon>Cystobacterineae</taxon>
        <taxon>Anaeromyxobacteraceae</taxon>
        <taxon>Anaeromyxobacter</taxon>
    </lineage>
</organism>
<gene>
    <name evidence="1" type="primary">ndk</name>
    <name type="ordered locus">AnaeK_2231</name>
</gene>